<reference key="1">
    <citation type="journal article" date="2003" name="DNA Res.">
        <title>Complete genome structure of Gloeobacter violaceus PCC 7421, a cyanobacterium that lacks thylakoids.</title>
        <authorList>
            <person name="Nakamura Y."/>
            <person name="Kaneko T."/>
            <person name="Sato S."/>
            <person name="Mimuro M."/>
            <person name="Miyashita H."/>
            <person name="Tsuchiya T."/>
            <person name="Sasamoto S."/>
            <person name="Watanabe A."/>
            <person name="Kawashima K."/>
            <person name="Kishida Y."/>
            <person name="Kiyokawa C."/>
            <person name="Kohara M."/>
            <person name="Matsumoto M."/>
            <person name="Matsuno A."/>
            <person name="Nakazaki N."/>
            <person name="Shimpo S."/>
            <person name="Takeuchi C."/>
            <person name="Yamada M."/>
            <person name="Tabata S."/>
        </authorList>
    </citation>
    <scope>NUCLEOTIDE SEQUENCE [LARGE SCALE GENOMIC DNA]</scope>
    <source>
        <strain>ATCC 29082 / PCC 7421</strain>
    </source>
</reference>
<organism>
    <name type="scientific">Gloeobacter violaceus (strain ATCC 29082 / PCC 7421)</name>
    <dbReference type="NCBI Taxonomy" id="251221"/>
    <lineage>
        <taxon>Bacteria</taxon>
        <taxon>Bacillati</taxon>
        <taxon>Cyanobacteriota</taxon>
        <taxon>Cyanophyceae</taxon>
        <taxon>Gloeobacterales</taxon>
        <taxon>Gloeobacteraceae</taxon>
        <taxon>Gloeobacter</taxon>
    </lineage>
</organism>
<evidence type="ECO:0000255" key="1">
    <source>
        <dbReference type="HAMAP-Rule" id="MF_00323"/>
    </source>
</evidence>
<comment type="function">
    <text evidence="1">Catalyzes the ferrous insertion into protoporphyrin IX.</text>
</comment>
<comment type="catalytic activity">
    <reaction evidence="1">
        <text>heme b + 2 H(+) = protoporphyrin IX + Fe(2+)</text>
        <dbReference type="Rhea" id="RHEA:22584"/>
        <dbReference type="ChEBI" id="CHEBI:15378"/>
        <dbReference type="ChEBI" id="CHEBI:29033"/>
        <dbReference type="ChEBI" id="CHEBI:57306"/>
        <dbReference type="ChEBI" id="CHEBI:60344"/>
        <dbReference type="EC" id="4.98.1.1"/>
    </reaction>
</comment>
<comment type="pathway">
    <text evidence="1">Porphyrin-containing compound metabolism; protoheme biosynthesis; protoheme from protoporphyrin-IX: step 1/1.</text>
</comment>
<comment type="subcellular location">
    <subcellularLocation>
        <location evidence="1">Cytoplasm</location>
    </subcellularLocation>
</comment>
<comment type="similarity">
    <text evidence="1">Belongs to the ferrochelatase family.</text>
</comment>
<feature type="chain" id="PRO_0000175146" description="Ferrochelatase">
    <location>
        <begin position="1"/>
        <end position="327"/>
    </location>
</feature>
<feature type="binding site" evidence="1">
    <location>
        <position position="196"/>
    </location>
    <ligand>
        <name>Fe cation</name>
        <dbReference type="ChEBI" id="CHEBI:24875"/>
    </ligand>
</feature>
<feature type="binding site" evidence="1">
    <location>
        <position position="277"/>
    </location>
    <ligand>
        <name>Fe cation</name>
        <dbReference type="ChEBI" id="CHEBI:24875"/>
    </ligand>
</feature>
<proteinExistence type="inferred from homology"/>
<sequence length="327" mass="36992">MAEVGVLLLNLGGPDKQEDVRPFLYNLFADPEIIRIPVPPLQKPLAWLISTLRAPKSRKNYQAIGGGSPLRAITNQQGRVLKKALAARGLDIEVYVGMRYWHPFTEEAVRKIKADGIRRLVLLPLYPQYSISTSGSSFKLLDQIWARDPSLKAIERITINSWYSRPGYIRAMGERVREGLDKFDNPDGVHILFSAHGVPRTYVDQDGDPYQRQTEETVDLVMQSLGRPNAHSLAYQSRVGPVEWLKPYTEDTINELAQKGVRSLLAVPVSFISEHIETLQEIEIEYREVAEAAGIHDFRRAKALNVNKTFIDDLAEMVIENLGVYSR</sequence>
<accession>Q7NMC7</accession>
<keyword id="KW-0963">Cytoplasm</keyword>
<keyword id="KW-0350">Heme biosynthesis</keyword>
<keyword id="KW-0408">Iron</keyword>
<keyword id="KW-0456">Lyase</keyword>
<keyword id="KW-0479">Metal-binding</keyword>
<keyword id="KW-0627">Porphyrin biosynthesis</keyword>
<keyword id="KW-1185">Reference proteome</keyword>
<protein>
    <recommendedName>
        <fullName evidence="1">Ferrochelatase</fullName>
        <ecNumber evidence="1">4.98.1.1</ecNumber>
    </recommendedName>
    <alternativeName>
        <fullName evidence="1">Heme synthase</fullName>
    </alternativeName>
    <alternativeName>
        <fullName evidence="1">Protoheme ferro-lyase</fullName>
    </alternativeName>
</protein>
<dbReference type="EC" id="4.98.1.1" evidence="1"/>
<dbReference type="EMBL" id="BA000045">
    <property type="protein sequence ID" value="BAC88780.1"/>
    <property type="molecule type" value="Genomic_DNA"/>
</dbReference>
<dbReference type="RefSeq" id="NP_923785.1">
    <property type="nucleotide sequence ID" value="NC_005125.1"/>
</dbReference>
<dbReference type="RefSeq" id="WP_011140841.1">
    <property type="nucleotide sequence ID" value="NC_005125.1"/>
</dbReference>
<dbReference type="SMR" id="Q7NMC7"/>
<dbReference type="FunCoup" id="Q7NMC7">
    <property type="interactions" value="381"/>
</dbReference>
<dbReference type="STRING" id="251221.gene:10758317"/>
<dbReference type="EnsemblBacteria" id="BAC88780">
    <property type="protein sequence ID" value="BAC88780"/>
    <property type="gene ID" value="BAC88780"/>
</dbReference>
<dbReference type="KEGG" id="gvi:gll0839"/>
<dbReference type="PATRIC" id="fig|251221.4.peg.856"/>
<dbReference type="eggNOG" id="COG0276">
    <property type="taxonomic scope" value="Bacteria"/>
</dbReference>
<dbReference type="HOGENOM" id="CLU_018884_4_1_3"/>
<dbReference type="InParanoid" id="Q7NMC7"/>
<dbReference type="OrthoDB" id="9809741at2"/>
<dbReference type="PhylomeDB" id="Q7NMC7"/>
<dbReference type="UniPathway" id="UPA00252">
    <property type="reaction ID" value="UER00325"/>
</dbReference>
<dbReference type="Proteomes" id="UP000000557">
    <property type="component" value="Chromosome"/>
</dbReference>
<dbReference type="GO" id="GO:0005737">
    <property type="term" value="C:cytoplasm"/>
    <property type="evidence" value="ECO:0007669"/>
    <property type="project" value="UniProtKB-SubCell"/>
</dbReference>
<dbReference type="GO" id="GO:0004325">
    <property type="term" value="F:ferrochelatase activity"/>
    <property type="evidence" value="ECO:0000318"/>
    <property type="project" value="GO_Central"/>
</dbReference>
<dbReference type="GO" id="GO:0046872">
    <property type="term" value="F:metal ion binding"/>
    <property type="evidence" value="ECO:0007669"/>
    <property type="project" value="UniProtKB-KW"/>
</dbReference>
<dbReference type="GO" id="GO:0006783">
    <property type="term" value="P:heme biosynthetic process"/>
    <property type="evidence" value="ECO:0000318"/>
    <property type="project" value="GO_Central"/>
</dbReference>
<dbReference type="CDD" id="cd00419">
    <property type="entry name" value="Ferrochelatase_C"/>
    <property type="match status" value="1"/>
</dbReference>
<dbReference type="CDD" id="cd03411">
    <property type="entry name" value="Ferrochelatase_N"/>
    <property type="match status" value="1"/>
</dbReference>
<dbReference type="FunFam" id="3.40.50.1400:FF:000006">
    <property type="entry name" value="Ferrochelatase"/>
    <property type="match status" value="1"/>
</dbReference>
<dbReference type="Gene3D" id="3.40.50.1400">
    <property type="match status" value="2"/>
</dbReference>
<dbReference type="HAMAP" id="MF_00323">
    <property type="entry name" value="Ferrochelatase"/>
    <property type="match status" value="1"/>
</dbReference>
<dbReference type="InterPro" id="IPR001015">
    <property type="entry name" value="Ferrochelatase"/>
</dbReference>
<dbReference type="InterPro" id="IPR019772">
    <property type="entry name" value="Ferrochelatase_AS"/>
</dbReference>
<dbReference type="InterPro" id="IPR033644">
    <property type="entry name" value="Ferrochelatase_C"/>
</dbReference>
<dbReference type="InterPro" id="IPR033659">
    <property type="entry name" value="Ferrochelatase_N"/>
</dbReference>
<dbReference type="NCBIfam" id="TIGR00109">
    <property type="entry name" value="hemH"/>
    <property type="match status" value="1"/>
</dbReference>
<dbReference type="PANTHER" id="PTHR11108">
    <property type="entry name" value="FERROCHELATASE"/>
    <property type="match status" value="1"/>
</dbReference>
<dbReference type="PANTHER" id="PTHR11108:SF1">
    <property type="entry name" value="FERROCHELATASE, MITOCHONDRIAL"/>
    <property type="match status" value="1"/>
</dbReference>
<dbReference type="Pfam" id="PF00762">
    <property type="entry name" value="Ferrochelatase"/>
    <property type="match status" value="1"/>
</dbReference>
<dbReference type="SUPFAM" id="SSF53800">
    <property type="entry name" value="Chelatase"/>
    <property type="match status" value="1"/>
</dbReference>
<dbReference type="PROSITE" id="PS00534">
    <property type="entry name" value="FERROCHELATASE"/>
    <property type="match status" value="1"/>
</dbReference>
<name>HEMH_GLOVI</name>
<gene>
    <name evidence="1" type="primary">hemH</name>
    <name type="ordered locus">gll0839</name>
</gene>